<gene>
    <name evidence="1" type="primary">metN</name>
    <name type="ordered locus">BAB2_0274</name>
</gene>
<sequence length="369" mass="39445">MQHAAVCSGTSRHRRTTVTIEKPPATSAPIVEMKDVRRMFGETAAINGVSLSVARGEILGIIGRSGAGKSTLIRCVNGLEKPDTGSIHIEGREITSLDEDALRPVRRRIGMVFQHFNLLSAKTAAQNIALPLKIAGMPKAERIKRVAELLELVGLSDKASHYPAQLSGGQKQRVGIARALAAEPAVLLSDEATSALDPETTQSILALLKDINAKLGLTILLITHEMDVIRRIADRVIVLDHGLIAEEGPVWKVFANPQSPVTQSMLQVLTPELPAIWRNRLEKKGDQAILRVKLSGMAAKGAFFNDVAAATSLAPQLIHGGMDTIQGEPVGTLFIGLPAEDKTKLKAAIGYLNTHADATEVLGYVSGNA</sequence>
<feature type="chain" id="PRO_0000270258" description="Methionine import ATP-binding protein MetN">
    <location>
        <begin position="1"/>
        <end position="369"/>
    </location>
</feature>
<feature type="domain" description="ABC transporter" evidence="1">
    <location>
        <begin position="31"/>
        <end position="266"/>
    </location>
</feature>
<feature type="binding site" evidence="1">
    <location>
        <begin position="63"/>
        <end position="70"/>
    </location>
    <ligand>
        <name>ATP</name>
        <dbReference type="ChEBI" id="CHEBI:30616"/>
    </ligand>
</feature>
<organism>
    <name type="scientific">Brucella abortus (strain 2308)</name>
    <dbReference type="NCBI Taxonomy" id="359391"/>
    <lineage>
        <taxon>Bacteria</taxon>
        <taxon>Pseudomonadati</taxon>
        <taxon>Pseudomonadota</taxon>
        <taxon>Alphaproteobacteria</taxon>
        <taxon>Hyphomicrobiales</taxon>
        <taxon>Brucellaceae</taxon>
        <taxon>Brucella/Ochrobactrum group</taxon>
        <taxon>Brucella</taxon>
    </lineage>
</organism>
<accession>Q2YIV5</accession>
<proteinExistence type="inferred from homology"/>
<keyword id="KW-0029">Amino-acid transport</keyword>
<keyword id="KW-0067">ATP-binding</keyword>
<keyword id="KW-0997">Cell inner membrane</keyword>
<keyword id="KW-1003">Cell membrane</keyword>
<keyword id="KW-0472">Membrane</keyword>
<keyword id="KW-0547">Nucleotide-binding</keyword>
<keyword id="KW-1185">Reference proteome</keyword>
<keyword id="KW-1278">Translocase</keyword>
<keyword id="KW-0813">Transport</keyword>
<evidence type="ECO:0000255" key="1">
    <source>
        <dbReference type="HAMAP-Rule" id="MF_01719"/>
    </source>
</evidence>
<evidence type="ECO:0000305" key="2"/>
<reference key="1">
    <citation type="journal article" date="2005" name="Infect. Immun.">
        <title>Whole-genome analyses of speciation events in pathogenic Brucellae.</title>
        <authorList>
            <person name="Chain P.S."/>
            <person name="Comerci D.J."/>
            <person name="Tolmasky M.E."/>
            <person name="Larimer F.W."/>
            <person name="Malfatti S.A."/>
            <person name="Vergez L.M."/>
            <person name="Aguero F."/>
            <person name="Land M.L."/>
            <person name="Ugalde R.A."/>
            <person name="Garcia E."/>
        </authorList>
    </citation>
    <scope>NUCLEOTIDE SEQUENCE [LARGE SCALE GENOMIC DNA]</scope>
    <source>
        <strain>2308</strain>
    </source>
</reference>
<protein>
    <recommendedName>
        <fullName evidence="1">Methionine import ATP-binding protein MetN</fullName>
        <ecNumber evidence="1">7.4.2.11</ecNumber>
    </recommendedName>
</protein>
<dbReference type="EC" id="7.4.2.11" evidence="1"/>
<dbReference type="EMBL" id="AM040265">
    <property type="protein sequence ID" value="CAJ12440.1"/>
    <property type="status" value="ALT_INIT"/>
    <property type="molecule type" value="Genomic_DNA"/>
</dbReference>
<dbReference type="SMR" id="Q2YIV5"/>
<dbReference type="STRING" id="359391.BAB2_0274"/>
<dbReference type="KEGG" id="bmf:BAB2_0274"/>
<dbReference type="HOGENOM" id="CLU_000604_1_3_5"/>
<dbReference type="Proteomes" id="UP000002719">
    <property type="component" value="Chromosome II"/>
</dbReference>
<dbReference type="GO" id="GO:0005886">
    <property type="term" value="C:plasma membrane"/>
    <property type="evidence" value="ECO:0007669"/>
    <property type="project" value="UniProtKB-SubCell"/>
</dbReference>
<dbReference type="GO" id="GO:0033232">
    <property type="term" value="F:ABC-type D-methionine transporter activity"/>
    <property type="evidence" value="ECO:0007669"/>
    <property type="project" value="UniProtKB-EC"/>
</dbReference>
<dbReference type="GO" id="GO:0005524">
    <property type="term" value="F:ATP binding"/>
    <property type="evidence" value="ECO:0007669"/>
    <property type="project" value="UniProtKB-KW"/>
</dbReference>
<dbReference type="GO" id="GO:0016887">
    <property type="term" value="F:ATP hydrolysis activity"/>
    <property type="evidence" value="ECO:0007669"/>
    <property type="project" value="InterPro"/>
</dbReference>
<dbReference type="CDD" id="cd03258">
    <property type="entry name" value="ABC_MetN_methionine_transporter"/>
    <property type="match status" value="1"/>
</dbReference>
<dbReference type="FunFam" id="3.40.50.300:FF:000056">
    <property type="entry name" value="Cell division ATP-binding protein FtsE"/>
    <property type="match status" value="1"/>
</dbReference>
<dbReference type="Gene3D" id="3.30.70.260">
    <property type="match status" value="1"/>
</dbReference>
<dbReference type="Gene3D" id="3.40.50.300">
    <property type="entry name" value="P-loop containing nucleotide triphosphate hydrolases"/>
    <property type="match status" value="1"/>
</dbReference>
<dbReference type="InterPro" id="IPR003593">
    <property type="entry name" value="AAA+_ATPase"/>
</dbReference>
<dbReference type="InterPro" id="IPR003439">
    <property type="entry name" value="ABC_transporter-like_ATP-bd"/>
</dbReference>
<dbReference type="InterPro" id="IPR017871">
    <property type="entry name" value="ABC_transporter-like_CS"/>
</dbReference>
<dbReference type="InterPro" id="IPR045865">
    <property type="entry name" value="ACT-like_dom_sf"/>
</dbReference>
<dbReference type="InterPro" id="IPR041701">
    <property type="entry name" value="MetN_ABC"/>
</dbReference>
<dbReference type="InterPro" id="IPR050086">
    <property type="entry name" value="MetN_ABC_transporter-like"/>
</dbReference>
<dbReference type="InterPro" id="IPR018449">
    <property type="entry name" value="NIL_domain"/>
</dbReference>
<dbReference type="InterPro" id="IPR027417">
    <property type="entry name" value="P-loop_NTPase"/>
</dbReference>
<dbReference type="PANTHER" id="PTHR43166">
    <property type="entry name" value="AMINO ACID IMPORT ATP-BINDING PROTEIN"/>
    <property type="match status" value="1"/>
</dbReference>
<dbReference type="PANTHER" id="PTHR43166:SF30">
    <property type="entry name" value="METHIONINE IMPORT ATP-BINDING PROTEIN METN"/>
    <property type="match status" value="1"/>
</dbReference>
<dbReference type="Pfam" id="PF00005">
    <property type="entry name" value="ABC_tran"/>
    <property type="match status" value="1"/>
</dbReference>
<dbReference type="Pfam" id="PF09383">
    <property type="entry name" value="NIL"/>
    <property type="match status" value="1"/>
</dbReference>
<dbReference type="SMART" id="SM00382">
    <property type="entry name" value="AAA"/>
    <property type="match status" value="1"/>
</dbReference>
<dbReference type="SMART" id="SM00930">
    <property type="entry name" value="NIL"/>
    <property type="match status" value="1"/>
</dbReference>
<dbReference type="SUPFAM" id="SSF55021">
    <property type="entry name" value="ACT-like"/>
    <property type="match status" value="1"/>
</dbReference>
<dbReference type="SUPFAM" id="SSF52540">
    <property type="entry name" value="P-loop containing nucleoside triphosphate hydrolases"/>
    <property type="match status" value="1"/>
</dbReference>
<dbReference type="PROSITE" id="PS00211">
    <property type="entry name" value="ABC_TRANSPORTER_1"/>
    <property type="match status" value="1"/>
</dbReference>
<dbReference type="PROSITE" id="PS50893">
    <property type="entry name" value="ABC_TRANSPORTER_2"/>
    <property type="match status" value="1"/>
</dbReference>
<dbReference type="PROSITE" id="PS51264">
    <property type="entry name" value="METN"/>
    <property type="match status" value="1"/>
</dbReference>
<name>METN_BRUA2</name>
<comment type="function">
    <text evidence="1">Part of the ABC transporter complex MetNIQ involved in methionine import. Responsible for energy coupling to the transport system.</text>
</comment>
<comment type="catalytic activity">
    <reaction evidence="1">
        <text>L-methionine(out) + ATP + H2O = L-methionine(in) + ADP + phosphate + H(+)</text>
        <dbReference type="Rhea" id="RHEA:29779"/>
        <dbReference type="ChEBI" id="CHEBI:15377"/>
        <dbReference type="ChEBI" id="CHEBI:15378"/>
        <dbReference type="ChEBI" id="CHEBI:30616"/>
        <dbReference type="ChEBI" id="CHEBI:43474"/>
        <dbReference type="ChEBI" id="CHEBI:57844"/>
        <dbReference type="ChEBI" id="CHEBI:456216"/>
        <dbReference type="EC" id="7.4.2.11"/>
    </reaction>
</comment>
<comment type="catalytic activity">
    <reaction evidence="1">
        <text>D-methionine(out) + ATP + H2O = D-methionine(in) + ADP + phosphate + H(+)</text>
        <dbReference type="Rhea" id="RHEA:29767"/>
        <dbReference type="ChEBI" id="CHEBI:15377"/>
        <dbReference type="ChEBI" id="CHEBI:15378"/>
        <dbReference type="ChEBI" id="CHEBI:30616"/>
        <dbReference type="ChEBI" id="CHEBI:43474"/>
        <dbReference type="ChEBI" id="CHEBI:57932"/>
        <dbReference type="ChEBI" id="CHEBI:456216"/>
        <dbReference type="EC" id="7.4.2.11"/>
    </reaction>
</comment>
<comment type="subunit">
    <text evidence="1">The complex is composed of two ATP-binding proteins (MetN), two transmembrane proteins (MetI) and a solute-binding protein (MetQ).</text>
</comment>
<comment type="subcellular location">
    <subcellularLocation>
        <location evidence="1">Cell inner membrane</location>
        <topology evidence="1">Peripheral membrane protein</topology>
    </subcellularLocation>
</comment>
<comment type="similarity">
    <text evidence="1">Belongs to the ABC transporter superfamily. Methionine importer (TC 3.A.1.24) family.</text>
</comment>
<comment type="sequence caution" evidence="2">
    <conflict type="erroneous initiation">
        <sequence resource="EMBL-CDS" id="CAJ12440"/>
    </conflict>
</comment>